<proteinExistence type="evidence at protein level"/>
<sequence>MDDGGHRENGRHKAAVQGQWLMQHQPSMKQVMSIIAERDAAIQERNLAISEKKAAVAERDMAFLQRDTAIAERNNAIMERDSALTALQYRENSMVTAPAANMSACPPGCQISRGVKHLHHPHMHHHHQQHHIPQLTENAYETREMEPNDGLPTSPPAGSTLESAKPKRGKRVNPKATTQTAANKRGPKNQRKVKKESEDDLNKIMFVKTTHDYTDEDSSKHILIGSKSDWKSQEMVGLNQVVYDETTMPPPVCSCTGVLRQCYKWGNGGWQSSCCTTTLSMYPLPALPNKRHARVGGRKMSGSAFNKLLSRLAAEGHHDLSNPVDLKDHWAKHGTNRYITIK</sequence>
<evidence type="ECO:0000255" key="1"/>
<evidence type="ECO:0000256" key="2">
    <source>
        <dbReference type="SAM" id="MobiDB-lite"/>
    </source>
</evidence>
<evidence type="ECO:0000269" key="3">
    <source>
    </source>
</evidence>
<evidence type="ECO:0000269" key="4">
    <source>
    </source>
</evidence>
<evidence type="ECO:0000269" key="5">
    <source>
    </source>
</evidence>
<evidence type="ECO:0000305" key="6"/>
<accession>Q8L999</accession>
<accession>A8MQZ4</accession>
<accession>Q9FIG5</accession>
<name>BPC6_ARATH</name>
<comment type="function">
    <text evidence="3">Transcriptional regulator that specifically binds to GA-rich elements (GAGA-repeats) present in regulatory sequences of genes involved in developmental processes.</text>
</comment>
<comment type="subunit">
    <text evidence="4">Homodimer. Heterodimer with BPC4.</text>
</comment>
<comment type="interaction">
    <interactant intactId="EBI-15196639">
        <id>Q8L999-2</id>
    </interactant>
    <interactant intactId="EBI-15194873">
        <id>F4JUI3</id>
        <label>BPC5</label>
    </interactant>
    <organismsDiffer>false</organismsDiffer>
    <experiments>3</experiments>
</comment>
<comment type="interaction">
    <interactant intactId="EBI-15196639">
        <id>Q8L999-2</id>
    </interactant>
    <interactant intactId="EBI-15192033">
        <id>O22800-2</id>
        <label>COL14</label>
    </interactant>
    <organismsDiffer>false</organismsDiffer>
    <experiments>4</experiments>
</comment>
<comment type="subcellular location">
    <subcellularLocation>
        <location evidence="3">Nucleus</location>
    </subcellularLocation>
    <subcellularLocation>
        <location evidence="3">Nucleus</location>
        <location evidence="3">Nucleolus</location>
    </subcellularLocation>
</comment>
<comment type="alternative products">
    <event type="alternative splicing"/>
    <isoform>
        <id>Q8L999-1</id>
        <name>1</name>
        <sequence type="displayed"/>
    </isoform>
    <isoform>
        <id>Q8L999-2</id>
        <name>2</name>
        <sequence type="described" ref="VSP_041900"/>
    </isoform>
</comment>
<comment type="tissue specificity">
    <text evidence="3 5">Expressed in seedlings, leaves and pistils. Detected in the base of flowers and tips of carpels, in sepal vasculature, in young rosette, in the lateral and tip of primary roots, and in ovule at the exception of the outer integument.</text>
</comment>
<comment type="domain">
    <text evidence="4">Alanine-zipper domain is involved in homo- or hetero-dimerization via electrostatic interaction.</text>
</comment>
<comment type="similarity">
    <text evidence="6">Belongs to the BBR/BPC family.</text>
</comment>
<comment type="sequence caution" evidence="6">
    <conflict type="erroneous gene model prediction">
        <sequence resource="EMBL-CDS" id="BAB10493"/>
    </conflict>
</comment>
<gene>
    <name type="primary">BPC6</name>
    <name type="synonym">BBR/BPC6</name>
    <name type="ordered locus">At5g42520</name>
    <name type="ORF">MDH9.22</name>
</gene>
<keyword id="KW-0025">Alternative splicing</keyword>
<keyword id="KW-0175">Coiled coil</keyword>
<keyword id="KW-0238">DNA-binding</keyword>
<keyword id="KW-0539">Nucleus</keyword>
<keyword id="KW-1185">Reference proteome</keyword>
<keyword id="KW-0804">Transcription</keyword>
<keyword id="KW-0805">Transcription regulation</keyword>
<dbReference type="EMBL" id="EF123107">
    <property type="protein sequence ID" value="ABL67948.1"/>
    <property type="molecule type" value="Genomic_DNA"/>
</dbReference>
<dbReference type="EMBL" id="EF123108">
    <property type="protein sequence ID" value="ABL67949.1"/>
    <property type="molecule type" value="mRNA"/>
</dbReference>
<dbReference type="EMBL" id="AY380572">
    <property type="protein sequence ID" value="AAR25825.1"/>
    <property type="molecule type" value="mRNA"/>
</dbReference>
<dbReference type="EMBL" id="AB016888">
    <property type="protein sequence ID" value="BAB10493.1"/>
    <property type="status" value="ALT_SEQ"/>
    <property type="molecule type" value="Genomic_DNA"/>
</dbReference>
<dbReference type="EMBL" id="CP002688">
    <property type="protein sequence ID" value="AED94820.1"/>
    <property type="molecule type" value="Genomic_DNA"/>
</dbReference>
<dbReference type="EMBL" id="CP002688">
    <property type="protein sequence ID" value="AED94821.1"/>
    <property type="molecule type" value="Genomic_DNA"/>
</dbReference>
<dbReference type="EMBL" id="BT024874">
    <property type="protein sequence ID" value="ABD85145.1"/>
    <property type="molecule type" value="mRNA"/>
</dbReference>
<dbReference type="EMBL" id="AK221752">
    <property type="protein sequence ID" value="BAD93808.1"/>
    <property type="molecule type" value="mRNA"/>
</dbReference>
<dbReference type="EMBL" id="AK227246">
    <property type="protein sequence ID" value="BAE99281.1"/>
    <property type="molecule type" value="mRNA"/>
</dbReference>
<dbReference type="EMBL" id="AY088564">
    <property type="protein sequence ID" value="AAM67342.1"/>
    <property type="molecule type" value="mRNA"/>
</dbReference>
<dbReference type="RefSeq" id="NP_001078690.1">
    <molecule id="Q8L999-2"/>
    <property type="nucleotide sequence ID" value="NM_001085221.1"/>
</dbReference>
<dbReference type="RefSeq" id="NP_568605.1">
    <molecule id="Q8L999-1"/>
    <property type="nucleotide sequence ID" value="NM_123617.3"/>
</dbReference>
<dbReference type="SMR" id="Q8L999"/>
<dbReference type="BioGRID" id="19509">
    <property type="interactions" value="19"/>
</dbReference>
<dbReference type="FunCoup" id="Q8L999">
    <property type="interactions" value="1715"/>
</dbReference>
<dbReference type="IntAct" id="Q8L999">
    <property type="interactions" value="15"/>
</dbReference>
<dbReference type="STRING" id="3702.Q8L999"/>
<dbReference type="iPTMnet" id="Q8L999"/>
<dbReference type="PaxDb" id="3702-AT5G42520.1"/>
<dbReference type="ProteomicsDB" id="240550">
    <molecule id="Q8L999-1"/>
</dbReference>
<dbReference type="EnsemblPlants" id="AT5G42520.1">
    <molecule id="Q8L999-1"/>
    <property type="protein sequence ID" value="AT5G42520.1"/>
    <property type="gene ID" value="AT5G42520"/>
</dbReference>
<dbReference type="EnsemblPlants" id="AT5G42520.2">
    <molecule id="Q8L999-2"/>
    <property type="protein sequence ID" value="AT5G42520.2"/>
    <property type="gene ID" value="AT5G42520"/>
</dbReference>
<dbReference type="GeneID" id="834259"/>
<dbReference type="Gramene" id="AT5G42520.1">
    <molecule id="Q8L999-1"/>
    <property type="protein sequence ID" value="AT5G42520.1"/>
    <property type="gene ID" value="AT5G42520"/>
</dbReference>
<dbReference type="Gramene" id="AT5G42520.2">
    <molecule id="Q8L999-2"/>
    <property type="protein sequence ID" value="AT5G42520.2"/>
    <property type="gene ID" value="AT5G42520"/>
</dbReference>
<dbReference type="KEGG" id="ath:AT5G42520"/>
<dbReference type="Araport" id="AT5G42520"/>
<dbReference type="TAIR" id="AT5G42520">
    <property type="gene designation" value="BPC6"/>
</dbReference>
<dbReference type="eggNOG" id="ENOG502QSGE">
    <property type="taxonomic scope" value="Eukaryota"/>
</dbReference>
<dbReference type="InParanoid" id="Q8L999"/>
<dbReference type="OMA" id="REMHTTD"/>
<dbReference type="PhylomeDB" id="Q8L999"/>
<dbReference type="PRO" id="PR:Q8L999"/>
<dbReference type="Proteomes" id="UP000006548">
    <property type="component" value="Chromosome 5"/>
</dbReference>
<dbReference type="ExpressionAtlas" id="Q8L999">
    <property type="expression patterns" value="baseline and differential"/>
</dbReference>
<dbReference type="GO" id="GO:0005730">
    <property type="term" value="C:nucleolus"/>
    <property type="evidence" value="ECO:0000314"/>
    <property type="project" value="UniProtKB"/>
</dbReference>
<dbReference type="GO" id="GO:0005634">
    <property type="term" value="C:nucleus"/>
    <property type="evidence" value="ECO:0000314"/>
    <property type="project" value="UniProtKB"/>
</dbReference>
<dbReference type="GO" id="GO:0003677">
    <property type="term" value="F:DNA binding"/>
    <property type="evidence" value="ECO:0000314"/>
    <property type="project" value="TAIR"/>
</dbReference>
<dbReference type="GO" id="GO:0042803">
    <property type="term" value="F:protein homodimerization activity"/>
    <property type="evidence" value="ECO:0000314"/>
    <property type="project" value="UniProtKB"/>
</dbReference>
<dbReference type="GO" id="GO:0000976">
    <property type="term" value="F:transcription cis-regulatory region binding"/>
    <property type="evidence" value="ECO:0000353"/>
    <property type="project" value="TAIR"/>
</dbReference>
<dbReference type="GO" id="GO:0009723">
    <property type="term" value="P:response to ethylene"/>
    <property type="evidence" value="ECO:0000316"/>
    <property type="project" value="TAIR"/>
</dbReference>
<dbReference type="InterPro" id="IPR010409">
    <property type="entry name" value="GAGA-bd_tscrpt_act"/>
</dbReference>
<dbReference type="PANTHER" id="PTHR31421">
    <property type="entry name" value="PROTEIN BASIC PENTACYSTEINE3"/>
    <property type="match status" value="1"/>
</dbReference>
<dbReference type="PANTHER" id="PTHR31421:SF2">
    <property type="entry name" value="PROTEIN BASIC PENTACYSTEINE6"/>
    <property type="match status" value="1"/>
</dbReference>
<dbReference type="Pfam" id="PF06217">
    <property type="entry name" value="GAGA_bind"/>
    <property type="match status" value="1"/>
</dbReference>
<dbReference type="SMART" id="SM01226">
    <property type="entry name" value="GAGA_bind"/>
    <property type="match status" value="1"/>
</dbReference>
<reference key="1">
    <citation type="journal article" date="2003" name="Plant J.">
        <title>The GA octodinucleotide repeat binding factor BBR participates in the transcriptional regulation of the homeobox gene Bkn3.</title>
        <authorList>
            <person name="Santi L."/>
            <person name="Wang Y."/>
            <person name="Stile M.R."/>
            <person name="Berendzen K.W."/>
            <person name="Wanke D."/>
            <person name="Roig C."/>
            <person name="Pozzi C."/>
            <person name="Mueller K."/>
            <person name="Mueller J."/>
            <person name="Rohde W."/>
            <person name="Salamini F."/>
        </authorList>
    </citation>
    <scope>NUCLEOTIDE SEQUENCE [GENOMIC DNA / MRNA] (ISOFORM 1)</scope>
    <source>
        <strain>cv. Shokei</strain>
    </source>
</reference>
<reference key="2">
    <citation type="journal article" date="2004" name="Plant J.">
        <title>Definition and interactions of a positive regulatory element of the Arabidopsis INNER NO OUTER promoter.</title>
        <authorList>
            <person name="Meister R.J."/>
            <person name="Williams L.A."/>
            <person name="Monfared M.M."/>
            <person name="Gallagher T.L."/>
            <person name="Kraft E.A."/>
            <person name="Nelson C.G."/>
            <person name="Gasser C.S."/>
        </authorList>
    </citation>
    <scope>NUCLEOTIDE SEQUENCE [MRNA] (ISOFORM 1)</scope>
    <scope>FUNCTION</scope>
    <scope>DNA-BINDING</scope>
    <scope>TISSUE SPECIFICITY</scope>
    <scope>SUBCELLULAR LOCATION</scope>
    <source>
        <strain>cv. Landsberg erecta</strain>
    </source>
</reference>
<reference key="3">
    <citation type="journal article" date="1998" name="DNA Res.">
        <title>Structural analysis of Arabidopsis thaliana chromosome 5. VIII. Sequence features of the regions of 1,081,958 bp covered by seventeen physically assigned P1 and TAC clones.</title>
        <authorList>
            <person name="Asamizu E."/>
            <person name="Sato S."/>
            <person name="Kaneko T."/>
            <person name="Nakamura Y."/>
            <person name="Kotani H."/>
            <person name="Miyajima N."/>
            <person name="Tabata S."/>
        </authorList>
    </citation>
    <scope>NUCLEOTIDE SEQUENCE [LARGE SCALE GENOMIC DNA]</scope>
    <source>
        <strain>cv. Columbia</strain>
    </source>
</reference>
<reference key="4">
    <citation type="journal article" date="2017" name="Plant J.">
        <title>Araport11: a complete reannotation of the Arabidopsis thaliana reference genome.</title>
        <authorList>
            <person name="Cheng C.Y."/>
            <person name="Krishnakumar V."/>
            <person name="Chan A.P."/>
            <person name="Thibaud-Nissen F."/>
            <person name="Schobel S."/>
            <person name="Town C.D."/>
        </authorList>
    </citation>
    <scope>GENOME REANNOTATION</scope>
    <source>
        <strain>cv. Columbia</strain>
    </source>
</reference>
<reference key="5">
    <citation type="submission" date="2006-03" db="EMBL/GenBank/DDBJ databases">
        <title>Arabidopsis ORF clones.</title>
        <authorList>
            <person name="Shinn P."/>
            <person name="Chen H."/>
            <person name="Kim C.J."/>
            <person name="Ecker J.R."/>
        </authorList>
    </citation>
    <scope>NUCLEOTIDE SEQUENCE [LARGE SCALE MRNA] (ISOFORM 1)</scope>
    <source>
        <strain>cv. Columbia</strain>
    </source>
</reference>
<reference key="6">
    <citation type="submission" date="2006-07" db="EMBL/GenBank/DDBJ databases">
        <title>Large-scale analysis of RIKEN Arabidopsis full-length (RAFL) cDNAs.</title>
        <authorList>
            <person name="Totoki Y."/>
            <person name="Seki M."/>
            <person name="Ishida J."/>
            <person name="Nakajima M."/>
            <person name="Enju A."/>
            <person name="Kamiya A."/>
            <person name="Narusaka M."/>
            <person name="Shin-i T."/>
            <person name="Nakagawa M."/>
            <person name="Sakamoto N."/>
            <person name="Oishi K."/>
            <person name="Kohara Y."/>
            <person name="Kobayashi M."/>
            <person name="Toyoda A."/>
            <person name="Sakaki Y."/>
            <person name="Sakurai T."/>
            <person name="Iida K."/>
            <person name="Akiyama K."/>
            <person name="Satou M."/>
            <person name="Toyoda T."/>
            <person name="Konagaya A."/>
            <person name="Carninci P."/>
            <person name="Kawai J."/>
            <person name="Hayashizaki Y."/>
            <person name="Shinozaki K."/>
        </authorList>
    </citation>
    <scope>NUCLEOTIDE SEQUENCE [LARGE SCALE MRNA] (ISOFORM 1)</scope>
    <source>
        <strain>cv. Columbia</strain>
    </source>
</reference>
<reference key="7">
    <citation type="submission" date="2002-03" db="EMBL/GenBank/DDBJ databases">
        <title>Full-length cDNA from Arabidopsis thaliana.</title>
        <authorList>
            <person name="Brover V.V."/>
            <person name="Troukhan M.E."/>
            <person name="Alexandrov N.A."/>
            <person name="Lu Y.-P."/>
            <person name="Flavell R.B."/>
            <person name="Feldmann K.A."/>
        </authorList>
    </citation>
    <scope>NUCLEOTIDE SEQUENCE [LARGE SCALE MRNA] (ISOFORM 1)</scope>
</reference>
<reference key="8">
    <citation type="book" date="2009" name="Proceedings of the 20th international conference on Arabidopsis research">
        <title>The plant specific BPC/BBR family of GAGA-repeat binding proteins.</title>
        <authorList>
            <person name="Bloss U."/>
            <person name="Hohenstatt M.L."/>
            <person name="Hummel S."/>
            <person name="Harter K."/>
            <person name="Wanke D."/>
        </authorList>
    </citation>
    <scope>GENE FAMILY</scope>
</reference>
<reference key="9">
    <citation type="journal article" date="2011" name="Plant J.">
        <title>Overlapping and antagonistic activities of BASIC PENTACYSTEINE genes affect a range of developmental processes in Arabidopsis.</title>
        <authorList>
            <person name="Monfared M.M."/>
            <person name="Simon M.K."/>
            <person name="Meister R.J."/>
            <person name="Roig-Villanova I."/>
            <person name="Kooiker M."/>
            <person name="Colombo L."/>
            <person name="Fletcher J.C."/>
            <person name="Gasser C.S."/>
        </authorList>
    </citation>
    <scope>TISSUE SPECIFICITY</scope>
</reference>
<reference key="10">
    <citation type="journal article" date="2011" name="PLoS ONE">
        <title>Alanine zipper-like coiled-coil domains are necessary for homotypic dimerization of plant GAGA-factors in the nucleus and nucleolus.</title>
        <authorList>
            <person name="Wanke D."/>
            <person name="Hohenstatt M.L."/>
            <person name="Dynowski M."/>
            <person name="Bloss U."/>
            <person name="Hecker A."/>
            <person name="Elgass K."/>
            <person name="Hummel S."/>
            <person name="Hahn A."/>
            <person name="Caesar K."/>
            <person name="Schleifenbaum F."/>
            <person name="Harter K."/>
            <person name="Berendzen K.W."/>
        </authorList>
    </citation>
    <scope>DOMAIN DIMERIZATION</scope>
    <scope>SUBUNIT</scope>
</reference>
<protein>
    <recommendedName>
        <fullName>Protein BASIC PENTACYSTEINE6</fullName>
        <shortName>AtBPC6</shortName>
    </recommendedName>
    <alternativeName>
        <fullName>GAGA-binding transcriptional activator BBR/BPC6</fullName>
    </alternativeName>
</protein>
<feature type="chain" id="PRO_0000413440" description="Protein BASIC PENTACYSTEINE6">
    <location>
        <begin position="1"/>
        <end position="342"/>
    </location>
</feature>
<feature type="region of interest" description="Alanine-zipper">
    <location>
        <begin position="41"/>
        <end position="76"/>
    </location>
</feature>
<feature type="region of interest" description="Disordered" evidence="2">
    <location>
        <begin position="143"/>
        <end position="199"/>
    </location>
</feature>
<feature type="region of interest" description="Required for nucleus and nucleolus localization">
    <location>
        <begin position="164"/>
        <end position="195"/>
    </location>
</feature>
<feature type="coiled-coil region" evidence="1">
    <location>
        <begin position="41"/>
        <end position="67"/>
    </location>
</feature>
<feature type="short sequence motif" description="Nuclear localization signal" evidence="1">
    <location>
        <begin position="192"/>
        <end position="195"/>
    </location>
</feature>
<feature type="compositionally biased region" description="Basic residues" evidence="2">
    <location>
        <begin position="185"/>
        <end position="194"/>
    </location>
</feature>
<feature type="splice variant" id="VSP_041900" description="In isoform 2." evidence="6">
    <location>
        <begin position="19"/>
        <end position="22"/>
    </location>
</feature>
<organism>
    <name type="scientific">Arabidopsis thaliana</name>
    <name type="common">Mouse-ear cress</name>
    <dbReference type="NCBI Taxonomy" id="3702"/>
    <lineage>
        <taxon>Eukaryota</taxon>
        <taxon>Viridiplantae</taxon>
        <taxon>Streptophyta</taxon>
        <taxon>Embryophyta</taxon>
        <taxon>Tracheophyta</taxon>
        <taxon>Spermatophyta</taxon>
        <taxon>Magnoliopsida</taxon>
        <taxon>eudicotyledons</taxon>
        <taxon>Gunneridae</taxon>
        <taxon>Pentapetalae</taxon>
        <taxon>rosids</taxon>
        <taxon>malvids</taxon>
        <taxon>Brassicales</taxon>
        <taxon>Brassicaceae</taxon>
        <taxon>Camelineae</taxon>
        <taxon>Arabidopsis</taxon>
    </lineage>
</organism>